<accession>O60732</accession>
<accession>A0PK03</accession>
<accession>O75451</accession>
<accession>Q8TCV4</accession>
<reference key="1">
    <citation type="journal article" date="1998" name="Cancer Res.">
        <title>Identification of a new MAGE gene with tumor-specific expression by representational difference analysis.</title>
        <authorList>
            <person name="Lucas S."/>
            <person name="De Smet C."/>
            <person name="Arden K.C."/>
            <person name="Viars C.S."/>
            <person name="Lethe B.G."/>
            <person name="Lurquin C."/>
            <person name="Boon T."/>
        </authorList>
    </citation>
    <scope>NUCLEOTIDE SEQUENCE [GENOMIC DNA]</scope>
    <scope>VARIANTS TYR-25; ILE-151 AND GLN-327</scope>
    <source>
        <tissue>Melanoma</tissue>
    </source>
</reference>
<reference key="2">
    <citation type="journal article" date="1998" name="Proc. Natl. Acad. Sci. U.S.A.">
        <title>Identification of multiple cancer/testis antigens by allogeneic antibody screening of a melanoma cell line library.</title>
        <authorList>
            <person name="Chen Y.-T."/>
            <person name="Gure A.O."/>
            <person name="Tsang S."/>
            <person name="Stockert E."/>
            <person name="Jager E."/>
            <person name="Knuth A."/>
            <person name="Old L.J."/>
        </authorList>
    </citation>
    <scope>NUCLEOTIDE SEQUENCE [MRNA] (ISOFORM 1)</scope>
    <scope>VARIANTS ILE-151 AND GLN-327</scope>
    <source>
        <tissue>Melanoma</tissue>
    </source>
</reference>
<reference key="3">
    <citation type="journal article" date="2005" name="Nature">
        <title>The DNA sequence of the human X chromosome.</title>
        <authorList>
            <person name="Ross M.T."/>
            <person name="Grafham D.V."/>
            <person name="Coffey A.J."/>
            <person name="Scherer S."/>
            <person name="McLay K."/>
            <person name="Muzny D."/>
            <person name="Platzer M."/>
            <person name="Howell G.R."/>
            <person name="Burrows C."/>
            <person name="Bird C.P."/>
            <person name="Frankish A."/>
            <person name="Lovell F.L."/>
            <person name="Howe K.L."/>
            <person name="Ashurst J.L."/>
            <person name="Fulton R.S."/>
            <person name="Sudbrak R."/>
            <person name="Wen G."/>
            <person name="Jones M.C."/>
            <person name="Hurles M.E."/>
            <person name="Andrews T.D."/>
            <person name="Scott C.E."/>
            <person name="Searle S."/>
            <person name="Ramser J."/>
            <person name="Whittaker A."/>
            <person name="Deadman R."/>
            <person name="Carter N.P."/>
            <person name="Hunt S.E."/>
            <person name="Chen R."/>
            <person name="Cree A."/>
            <person name="Gunaratne P."/>
            <person name="Havlak P."/>
            <person name="Hodgson A."/>
            <person name="Metzker M.L."/>
            <person name="Richards S."/>
            <person name="Scott G."/>
            <person name="Steffen D."/>
            <person name="Sodergren E."/>
            <person name="Wheeler D.A."/>
            <person name="Worley K.C."/>
            <person name="Ainscough R."/>
            <person name="Ambrose K.D."/>
            <person name="Ansari-Lari M.A."/>
            <person name="Aradhya S."/>
            <person name="Ashwell R.I."/>
            <person name="Babbage A.K."/>
            <person name="Bagguley C.L."/>
            <person name="Ballabio A."/>
            <person name="Banerjee R."/>
            <person name="Barker G.E."/>
            <person name="Barlow K.F."/>
            <person name="Barrett I.P."/>
            <person name="Bates K.N."/>
            <person name="Beare D.M."/>
            <person name="Beasley H."/>
            <person name="Beasley O."/>
            <person name="Beck A."/>
            <person name="Bethel G."/>
            <person name="Blechschmidt K."/>
            <person name="Brady N."/>
            <person name="Bray-Allen S."/>
            <person name="Bridgeman A.M."/>
            <person name="Brown A.J."/>
            <person name="Brown M.J."/>
            <person name="Bonnin D."/>
            <person name="Bruford E.A."/>
            <person name="Buhay C."/>
            <person name="Burch P."/>
            <person name="Burford D."/>
            <person name="Burgess J."/>
            <person name="Burrill W."/>
            <person name="Burton J."/>
            <person name="Bye J.M."/>
            <person name="Carder C."/>
            <person name="Carrel L."/>
            <person name="Chako J."/>
            <person name="Chapman J.C."/>
            <person name="Chavez D."/>
            <person name="Chen E."/>
            <person name="Chen G."/>
            <person name="Chen Y."/>
            <person name="Chen Z."/>
            <person name="Chinault C."/>
            <person name="Ciccodicola A."/>
            <person name="Clark S.Y."/>
            <person name="Clarke G."/>
            <person name="Clee C.M."/>
            <person name="Clegg S."/>
            <person name="Clerc-Blankenburg K."/>
            <person name="Clifford K."/>
            <person name="Cobley V."/>
            <person name="Cole C.G."/>
            <person name="Conquer J.S."/>
            <person name="Corby N."/>
            <person name="Connor R.E."/>
            <person name="David R."/>
            <person name="Davies J."/>
            <person name="Davis C."/>
            <person name="Davis J."/>
            <person name="Delgado O."/>
            <person name="Deshazo D."/>
            <person name="Dhami P."/>
            <person name="Ding Y."/>
            <person name="Dinh H."/>
            <person name="Dodsworth S."/>
            <person name="Draper H."/>
            <person name="Dugan-Rocha S."/>
            <person name="Dunham A."/>
            <person name="Dunn M."/>
            <person name="Durbin K.J."/>
            <person name="Dutta I."/>
            <person name="Eades T."/>
            <person name="Ellwood M."/>
            <person name="Emery-Cohen A."/>
            <person name="Errington H."/>
            <person name="Evans K.L."/>
            <person name="Faulkner L."/>
            <person name="Francis F."/>
            <person name="Frankland J."/>
            <person name="Fraser A.E."/>
            <person name="Galgoczy P."/>
            <person name="Gilbert J."/>
            <person name="Gill R."/>
            <person name="Gloeckner G."/>
            <person name="Gregory S.G."/>
            <person name="Gribble S."/>
            <person name="Griffiths C."/>
            <person name="Grocock R."/>
            <person name="Gu Y."/>
            <person name="Gwilliam R."/>
            <person name="Hamilton C."/>
            <person name="Hart E.A."/>
            <person name="Hawes A."/>
            <person name="Heath P.D."/>
            <person name="Heitmann K."/>
            <person name="Hennig S."/>
            <person name="Hernandez J."/>
            <person name="Hinzmann B."/>
            <person name="Ho S."/>
            <person name="Hoffs M."/>
            <person name="Howden P.J."/>
            <person name="Huckle E.J."/>
            <person name="Hume J."/>
            <person name="Hunt P.J."/>
            <person name="Hunt A.R."/>
            <person name="Isherwood J."/>
            <person name="Jacob L."/>
            <person name="Johnson D."/>
            <person name="Jones S."/>
            <person name="de Jong P.J."/>
            <person name="Joseph S.S."/>
            <person name="Keenan S."/>
            <person name="Kelly S."/>
            <person name="Kershaw J.K."/>
            <person name="Khan Z."/>
            <person name="Kioschis P."/>
            <person name="Klages S."/>
            <person name="Knights A.J."/>
            <person name="Kosiura A."/>
            <person name="Kovar-Smith C."/>
            <person name="Laird G.K."/>
            <person name="Langford C."/>
            <person name="Lawlor S."/>
            <person name="Leversha M."/>
            <person name="Lewis L."/>
            <person name="Liu W."/>
            <person name="Lloyd C."/>
            <person name="Lloyd D.M."/>
            <person name="Loulseged H."/>
            <person name="Loveland J.E."/>
            <person name="Lovell J.D."/>
            <person name="Lozado R."/>
            <person name="Lu J."/>
            <person name="Lyne R."/>
            <person name="Ma J."/>
            <person name="Maheshwari M."/>
            <person name="Matthews L.H."/>
            <person name="McDowall J."/>
            <person name="McLaren S."/>
            <person name="McMurray A."/>
            <person name="Meidl P."/>
            <person name="Meitinger T."/>
            <person name="Milne S."/>
            <person name="Miner G."/>
            <person name="Mistry S.L."/>
            <person name="Morgan M."/>
            <person name="Morris S."/>
            <person name="Mueller I."/>
            <person name="Mullikin J.C."/>
            <person name="Nguyen N."/>
            <person name="Nordsiek G."/>
            <person name="Nyakatura G."/>
            <person name="O'dell C.N."/>
            <person name="Okwuonu G."/>
            <person name="Palmer S."/>
            <person name="Pandian R."/>
            <person name="Parker D."/>
            <person name="Parrish J."/>
            <person name="Pasternak S."/>
            <person name="Patel D."/>
            <person name="Pearce A.V."/>
            <person name="Pearson D.M."/>
            <person name="Pelan S.E."/>
            <person name="Perez L."/>
            <person name="Porter K.M."/>
            <person name="Ramsey Y."/>
            <person name="Reichwald K."/>
            <person name="Rhodes S."/>
            <person name="Ridler K.A."/>
            <person name="Schlessinger D."/>
            <person name="Schueler M.G."/>
            <person name="Sehra H.K."/>
            <person name="Shaw-Smith C."/>
            <person name="Shen H."/>
            <person name="Sheridan E.M."/>
            <person name="Shownkeen R."/>
            <person name="Skuce C.D."/>
            <person name="Smith M.L."/>
            <person name="Sotheran E.C."/>
            <person name="Steingruber H.E."/>
            <person name="Steward C.A."/>
            <person name="Storey R."/>
            <person name="Swann R.M."/>
            <person name="Swarbreck D."/>
            <person name="Tabor P.E."/>
            <person name="Taudien S."/>
            <person name="Taylor T."/>
            <person name="Teague B."/>
            <person name="Thomas K."/>
            <person name="Thorpe A."/>
            <person name="Timms K."/>
            <person name="Tracey A."/>
            <person name="Trevanion S."/>
            <person name="Tromans A.C."/>
            <person name="d'Urso M."/>
            <person name="Verduzco D."/>
            <person name="Villasana D."/>
            <person name="Waldron L."/>
            <person name="Wall M."/>
            <person name="Wang Q."/>
            <person name="Warren J."/>
            <person name="Warry G.L."/>
            <person name="Wei X."/>
            <person name="West A."/>
            <person name="Whitehead S.L."/>
            <person name="Whiteley M.N."/>
            <person name="Wilkinson J.E."/>
            <person name="Willey D.L."/>
            <person name="Williams G."/>
            <person name="Williams L."/>
            <person name="Williamson A."/>
            <person name="Williamson H."/>
            <person name="Wilming L."/>
            <person name="Woodmansey R.L."/>
            <person name="Wray P.W."/>
            <person name="Yen J."/>
            <person name="Zhang J."/>
            <person name="Zhou J."/>
            <person name="Zoghbi H."/>
            <person name="Zorilla S."/>
            <person name="Buck D."/>
            <person name="Reinhardt R."/>
            <person name="Poustka A."/>
            <person name="Rosenthal A."/>
            <person name="Lehrach H."/>
            <person name="Meindl A."/>
            <person name="Minx P.J."/>
            <person name="Hillier L.W."/>
            <person name="Willard H.F."/>
            <person name="Wilson R.K."/>
            <person name="Waterston R.H."/>
            <person name="Rice C.M."/>
            <person name="Vaudin M."/>
            <person name="Coulson A."/>
            <person name="Nelson D.L."/>
            <person name="Weinstock G."/>
            <person name="Sulston J.E."/>
            <person name="Durbin R.M."/>
            <person name="Hubbard T."/>
            <person name="Gibbs R.A."/>
            <person name="Beck S."/>
            <person name="Rogers J."/>
            <person name="Bentley D.R."/>
        </authorList>
    </citation>
    <scope>NUCLEOTIDE SEQUENCE [LARGE SCALE GENOMIC DNA]</scope>
</reference>
<reference key="4">
    <citation type="journal article" date="2004" name="Genome Res.">
        <title>The status, quality, and expansion of the NIH full-length cDNA project: the Mammalian Gene Collection (MGC).</title>
        <authorList>
            <consortium name="The MGC Project Team"/>
        </authorList>
    </citation>
    <scope>NUCLEOTIDE SEQUENCE [LARGE SCALE MRNA] (ISOFORM 2)</scope>
</reference>
<reference key="5">
    <citation type="journal article" date="2011" name="BMC Syst. Biol.">
        <title>Initial characterization of the human central proteome.</title>
        <authorList>
            <person name="Burkard T.R."/>
            <person name="Planyavsky M."/>
            <person name="Kaupe I."/>
            <person name="Breitwieser F.P."/>
            <person name="Buerckstuemmer T."/>
            <person name="Bennett K.L."/>
            <person name="Superti-Furga G."/>
            <person name="Colinge J."/>
        </authorList>
    </citation>
    <scope>IDENTIFICATION BY MASS SPECTROMETRY [LARGE SCALE ANALYSIS]</scope>
</reference>
<reference key="6">
    <citation type="journal article" date="2013" name="J. Proteome Res.">
        <title>Toward a comprehensive characterization of a human cancer cell phosphoproteome.</title>
        <authorList>
            <person name="Zhou H."/>
            <person name="Di Palma S."/>
            <person name="Preisinger C."/>
            <person name="Peng M."/>
            <person name="Polat A.N."/>
            <person name="Heck A.J."/>
            <person name="Mohammed S."/>
        </authorList>
    </citation>
    <scope>PHOSPHORYLATION [LARGE SCALE ANALYSIS] AT SER-63; SER-207; SER-382 AND SER-1063</scope>
    <scope>IDENTIFICATION BY MASS SPECTROMETRY [LARGE SCALE ANALYSIS]</scope>
    <source>
        <tissue>Erythroleukemia</tissue>
    </source>
</reference>
<reference key="7">
    <citation type="journal article" date="2019" name="J. Proteome Res.">
        <title>Cell Type-Specific Expression of Testis Elevated Genes Based on Transcriptomics and Antibody-Based Proteomics.</title>
        <authorList>
            <person name="Pineau C."/>
            <person name="Hikmet F."/>
            <person name="Zhang C."/>
            <person name="Oksvold P."/>
            <person name="Chen S."/>
            <person name="Fagerberg L."/>
            <person name="Uhlen M."/>
            <person name="Lindskog C."/>
        </authorList>
    </citation>
    <scope>SUBCELLULAR LOCATION</scope>
</reference>
<dbReference type="EMBL" id="AF064589">
    <property type="protein sequence ID" value="AAC18837.1"/>
    <property type="molecule type" value="Genomic_DNA"/>
</dbReference>
<dbReference type="EMBL" id="AF056334">
    <property type="protein sequence ID" value="AAC24227.1"/>
    <property type="molecule type" value="mRNA"/>
</dbReference>
<dbReference type="EMBL" id="AL022152">
    <property type="status" value="NOT_ANNOTATED_CDS"/>
    <property type="molecule type" value="Genomic_DNA"/>
</dbReference>
<dbReference type="EMBL" id="BC127771">
    <property type="protein sequence ID" value="AAI27772.1"/>
    <property type="molecule type" value="mRNA"/>
</dbReference>
<dbReference type="CCDS" id="CCDS35417.1">
    <molecule id="O60732-1"/>
</dbReference>
<dbReference type="RefSeq" id="NP_005453.2">
    <molecule id="O60732-1"/>
    <property type="nucleotide sequence ID" value="NM_005462.5"/>
</dbReference>
<dbReference type="RefSeq" id="XP_011529720.1">
    <molecule id="O60732-1"/>
    <property type="nucleotide sequence ID" value="XM_011531418.3"/>
</dbReference>
<dbReference type="SMR" id="O60732"/>
<dbReference type="BioGRID" id="115272">
    <property type="interactions" value="17"/>
</dbReference>
<dbReference type="FunCoup" id="O60732">
    <property type="interactions" value="100"/>
</dbReference>
<dbReference type="IntAct" id="O60732">
    <property type="interactions" value="10"/>
</dbReference>
<dbReference type="MINT" id="O60732"/>
<dbReference type="STRING" id="9606.ENSP00000285879"/>
<dbReference type="GlyGen" id="O60732">
    <property type="glycosylation" value="2 sites, 1 O-linked glycan (1 site)"/>
</dbReference>
<dbReference type="iPTMnet" id="O60732"/>
<dbReference type="PhosphoSitePlus" id="O60732"/>
<dbReference type="BioMuta" id="MAGEC1"/>
<dbReference type="MassIVE" id="O60732"/>
<dbReference type="PaxDb" id="9606-ENSP00000285879"/>
<dbReference type="PeptideAtlas" id="O60732"/>
<dbReference type="ProteomicsDB" id="49577">
    <molecule id="O60732-1"/>
</dbReference>
<dbReference type="ProteomicsDB" id="77"/>
<dbReference type="Pumba" id="O60732"/>
<dbReference type="Antibodypedia" id="528">
    <property type="antibodies" value="144 antibodies from 27 providers"/>
</dbReference>
<dbReference type="DNASU" id="9947"/>
<dbReference type="Ensembl" id="ENST00000285879.5">
    <molecule id="O60732-1"/>
    <property type="protein sequence ID" value="ENSP00000285879.4"/>
    <property type="gene ID" value="ENSG00000155495.9"/>
</dbReference>
<dbReference type="Ensembl" id="ENST00000406005.2">
    <molecule id="O60732-2"/>
    <property type="protein sequence ID" value="ENSP00000385500.2"/>
    <property type="gene ID" value="ENSG00000155495.9"/>
</dbReference>
<dbReference type="GeneID" id="9947"/>
<dbReference type="KEGG" id="hsa:9947"/>
<dbReference type="MANE-Select" id="ENST00000285879.5">
    <property type="protein sequence ID" value="ENSP00000285879.4"/>
    <property type="RefSeq nucleotide sequence ID" value="NM_005462.5"/>
    <property type="RefSeq protein sequence ID" value="NP_005453.2"/>
</dbReference>
<dbReference type="UCSC" id="uc004fbt.4">
    <molecule id="O60732-1"/>
    <property type="organism name" value="human"/>
</dbReference>
<dbReference type="AGR" id="HGNC:6812"/>
<dbReference type="CTD" id="9947"/>
<dbReference type="DisGeNET" id="9947"/>
<dbReference type="GeneCards" id="MAGEC1"/>
<dbReference type="HGNC" id="HGNC:6812">
    <property type="gene designation" value="MAGEC1"/>
</dbReference>
<dbReference type="HPA" id="ENSG00000155495">
    <property type="expression patterns" value="Tissue enriched (testis)"/>
</dbReference>
<dbReference type="MIM" id="300223">
    <property type="type" value="gene"/>
</dbReference>
<dbReference type="neXtProt" id="NX_O60732"/>
<dbReference type="OpenTargets" id="ENSG00000155495"/>
<dbReference type="PharmGKB" id="PA30558"/>
<dbReference type="VEuPathDB" id="HostDB:ENSG00000155495"/>
<dbReference type="eggNOG" id="KOG4562">
    <property type="taxonomic scope" value="Eukaryota"/>
</dbReference>
<dbReference type="GeneTree" id="ENSGT00940000164535"/>
<dbReference type="HOGENOM" id="CLU_277023_0_0_1"/>
<dbReference type="InParanoid" id="O60732"/>
<dbReference type="OMA" id="YPQCPFP"/>
<dbReference type="OrthoDB" id="205198at2759"/>
<dbReference type="PAN-GO" id="O60732">
    <property type="GO annotations" value="2 GO annotations based on evolutionary models"/>
</dbReference>
<dbReference type="PhylomeDB" id="O60732"/>
<dbReference type="TreeFam" id="TF328505"/>
<dbReference type="PathwayCommons" id="O60732"/>
<dbReference type="SignaLink" id="O60732"/>
<dbReference type="BioGRID-ORCS" id="9947">
    <property type="hits" value="12 hits in 775 CRISPR screens"/>
</dbReference>
<dbReference type="GenomeRNAi" id="9947"/>
<dbReference type="Pharos" id="O60732">
    <property type="development level" value="Tbio"/>
</dbReference>
<dbReference type="PRO" id="PR:O60732"/>
<dbReference type="Proteomes" id="UP000005640">
    <property type="component" value="Chromosome X"/>
</dbReference>
<dbReference type="RNAct" id="O60732">
    <property type="molecule type" value="protein"/>
</dbReference>
<dbReference type="Bgee" id="ENSG00000155495">
    <property type="expression patterns" value="Expressed in male germ line stem cell (sensu Vertebrata) in testis and 18 other cell types or tissues"/>
</dbReference>
<dbReference type="GO" id="GO:0005737">
    <property type="term" value="C:cytoplasm"/>
    <property type="evidence" value="ECO:0000314"/>
    <property type="project" value="UniProtKB"/>
</dbReference>
<dbReference type="GO" id="GO:0005634">
    <property type="term" value="C:nucleus"/>
    <property type="evidence" value="ECO:0000318"/>
    <property type="project" value="GO_Central"/>
</dbReference>
<dbReference type="GO" id="GO:0000122">
    <property type="term" value="P:negative regulation of transcription by RNA polymerase II"/>
    <property type="evidence" value="ECO:0000318"/>
    <property type="project" value="GO_Central"/>
</dbReference>
<dbReference type="FunFam" id="1.10.10.1200:FF:000007">
    <property type="entry name" value="Melanoma-associated antigen C2"/>
    <property type="match status" value="1"/>
</dbReference>
<dbReference type="FunFam" id="1.10.10.1210:FF:000001">
    <property type="entry name" value="melanoma-associated antigen D1"/>
    <property type="match status" value="1"/>
</dbReference>
<dbReference type="Gene3D" id="1.10.10.1200">
    <property type="entry name" value="MAGE homology domain, winged helix WH1 motif"/>
    <property type="match status" value="1"/>
</dbReference>
<dbReference type="Gene3D" id="1.10.10.1210">
    <property type="entry name" value="MAGE homology domain, winged helix WH2 motif"/>
    <property type="match status" value="1"/>
</dbReference>
<dbReference type="InterPro" id="IPR037445">
    <property type="entry name" value="MAGE"/>
</dbReference>
<dbReference type="InterPro" id="IPR041898">
    <property type="entry name" value="MAGE_WH1"/>
</dbReference>
<dbReference type="InterPro" id="IPR041899">
    <property type="entry name" value="MAGE_WH2"/>
</dbReference>
<dbReference type="InterPro" id="IPR002190">
    <property type="entry name" value="MHD_dom"/>
</dbReference>
<dbReference type="PANTHER" id="PTHR11736:SF17">
    <property type="entry name" value="MELANOMA-ASSOCIATED ANTIGEN C1"/>
    <property type="match status" value="1"/>
</dbReference>
<dbReference type="PANTHER" id="PTHR11736">
    <property type="entry name" value="MELANOMA-ASSOCIATED ANTIGEN MAGE ANTIGEN"/>
    <property type="match status" value="1"/>
</dbReference>
<dbReference type="Pfam" id="PF01454">
    <property type="entry name" value="MAGE"/>
    <property type="match status" value="1"/>
</dbReference>
<dbReference type="SMART" id="SM01373">
    <property type="entry name" value="MAGE"/>
    <property type="match status" value="1"/>
</dbReference>
<dbReference type="PROSITE" id="PS50838">
    <property type="entry name" value="MAGE"/>
    <property type="match status" value="1"/>
</dbReference>
<name>MAGC1_HUMAN</name>
<protein>
    <recommendedName>
        <fullName>Melanoma-associated antigen C1</fullName>
    </recommendedName>
    <alternativeName>
        <fullName>Cancer/testis antigen 7.1</fullName>
        <shortName>CT7.1</shortName>
    </alternativeName>
    <alternativeName>
        <fullName>MAGE-C1 antigen</fullName>
    </alternativeName>
</protein>
<evidence type="ECO:0000255" key="1">
    <source>
        <dbReference type="PROSITE-ProRule" id="PRU00127"/>
    </source>
</evidence>
<evidence type="ECO:0000256" key="2">
    <source>
        <dbReference type="SAM" id="MobiDB-lite"/>
    </source>
</evidence>
<evidence type="ECO:0000269" key="3">
    <source>
    </source>
</evidence>
<evidence type="ECO:0000269" key="4">
    <source>
    </source>
</evidence>
<evidence type="ECO:0000269" key="5">
    <source>
    </source>
</evidence>
<evidence type="ECO:0000303" key="6">
    <source>
    </source>
</evidence>
<evidence type="ECO:0000305" key="7"/>
<evidence type="ECO:0007744" key="8">
    <source>
    </source>
</evidence>
<proteinExistence type="evidence at protein level"/>
<gene>
    <name type="primary">MAGEC1</name>
</gene>
<organism>
    <name type="scientific">Homo sapiens</name>
    <name type="common">Human</name>
    <dbReference type="NCBI Taxonomy" id="9606"/>
    <lineage>
        <taxon>Eukaryota</taxon>
        <taxon>Metazoa</taxon>
        <taxon>Chordata</taxon>
        <taxon>Craniata</taxon>
        <taxon>Vertebrata</taxon>
        <taxon>Euteleostomi</taxon>
        <taxon>Mammalia</taxon>
        <taxon>Eutheria</taxon>
        <taxon>Euarchontoglires</taxon>
        <taxon>Primates</taxon>
        <taxon>Haplorrhini</taxon>
        <taxon>Catarrhini</taxon>
        <taxon>Hominidae</taxon>
        <taxon>Homo</taxon>
    </lineage>
</organism>
<keyword id="KW-0025">Alternative splicing</keyword>
<keyword id="KW-0963">Cytoplasm</keyword>
<keyword id="KW-0597">Phosphoprotein</keyword>
<keyword id="KW-1267">Proteomics identification</keyword>
<keyword id="KW-1185">Reference proteome</keyword>
<keyword id="KW-0677">Repeat</keyword>
<keyword id="KW-0825">Tumor antigen</keyword>
<sequence>MGDKDMPTAGMPSLLQSSSESPQSCPEGEDSQSPLQIPQSSPESDDTLYPLQSPQSRSEGEDSSDPLQRPPEGKDSQSPLQIPQSSPEGDDTQSPLQNSQSSPEGKDSLSPLEISQSPPEGEDVQSPLQNPASSFFSSALLSIFQSSPESTQSPFEGFPQSVLQIPVSAASSSTLVSIFQSSPESTQSPFEGFPQSPLQIPVSRSFSSTLLSIFQSSPERTQSTFEGFAQSPLQIPVSPSSSSTLLSLFQSFSERTQSTFEGFAQSSLQIPVSPSFSSTLVSLFQSSPERTQSTFEGFPQSPLQIPVSSSSSSTLLSLFQSSPERTHSTFEGFPQSLLQIPMTSSFSSTLLSIFQSSPESAQSTFEGFPQSPLQIPGSPSFSSTLLSLFQSSPERTHSTFEGFPQSPLQIPMTSSFSSTLLSILQSSPESAQSAFEGFPQSPLQIPVSSSFSYTLLSLFQSSPERTHSTFEGFPQSPLQIPVSSSSSSSTLLSLFQSSPECTQSTFEGFPQSPLQIPQSPPEGENTHSPLQIVPSLPEWEDSLSPHYFPQSPPQGEDSLSPHYFPQSPPQGEDSLSPHYFPQSPQGEDSLSPHYFPQSPPQGEDSMSPLYFPQSPLQGEEFQSSLQSPVSICSSSTPSSLPQSFPESSQSPPEGPVQSPLHSPQSPPEGMHSQSPLQSPESAPEGEDSLSPLQIPQSPLEGEDSLSSLHFPQSPPEWEDSLSPLHFPQFPPQGEDFQSSLQSPVSICSSSTSLSLPQSFPESPQSPPEGPAQSPLQRPVSSFFSYTLASLLQSSHESPQSPPEGPAQSPLQSPVSSFPSSTSSSLSQSSPVSSFPSSTSSSLSKSSPESPLQSPVISFSSSTSLSPFSEESSSPVDEYTSSSDTLLESDSLTDSESLIESEPLFTYTLDEKVDELARFLLLKYQVKQPITKAEMLTNVISRYTGYFPVIFRKAREFIEILFGISLREVDPDDSYVFVNTLDLTSEGCLSDEQGMSQNRLLILILSIIFIKGTYASEEVIWDVLSGIGVRAGREHFAFGEPRELLTKVWVQEHYLEYREVPNSSPPRYEFLWGPRAHSEVIKRKVVEFLAMLKNTVPITFPSSYKDALKDVEERAQAIIDTTDDSTATESASSSVMSPSFSSE</sequence>
<comment type="interaction">
    <interactant intactId="EBI-1188463">
        <id>O60732</id>
    </interactant>
    <interactant intactId="EBI-1188472">
        <id>P78358</id>
        <label>CTAG1B</label>
    </interactant>
    <organismsDiffer>false</organismsDiffer>
    <experiments>6</experiments>
</comment>
<comment type="subcellular location">
    <subcellularLocation>
        <location evidence="3">Cytoplasm</location>
    </subcellularLocation>
</comment>
<comment type="alternative products">
    <event type="alternative splicing"/>
    <isoform>
        <id>O60732-1</id>
        <name>1</name>
        <sequence type="displayed"/>
    </isoform>
    <isoform>
        <id>O60732-2</id>
        <name>2</name>
        <sequence type="described" ref="VSP_056382"/>
    </isoform>
</comment>
<comment type="tissue specificity">
    <text>Expressed in testis and in tumors of a wide variety of histologic types.</text>
</comment>
<feature type="chain" id="PRO_0000156720" description="Melanoma-associated antigen C1">
    <location>
        <begin position="1"/>
        <end position="1142"/>
    </location>
</feature>
<feature type="domain" description="MAGE" evidence="1">
    <location>
        <begin position="908"/>
        <end position="1106"/>
    </location>
</feature>
<feature type="region of interest" description="Disordered" evidence="2">
    <location>
        <begin position="1"/>
        <end position="132"/>
    </location>
</feature>
<feature type="region of interest" description="Disordered" evidence="2">
    <location>
        <begin position="502"/>
        <end position="778"/>
    </location>
</feature>
<feature type="region of interest" description="Disordered" evidence="2">
    <location>
        <begin position="791"/>
        <end position="893"/>
    </location>
</feature>
<feature type="region of interest" description="Disordered" evidence="2">
    <location>
        <begin position="1118"/>
        <end position="1142"/>
    </location>
</feature>
<feature type="compositionally biased region" description="Low complexity" evidence="2">
    <location>
        <begin position="13"/>
        <end position="42"/>
    </location>
</feature>
<feature type="compositionally biased region" description="Low complexity" evidence="2">
    <location>
        <begin position="76"/>
        <end position="87"/>
    </location>
</feature>
<feature type="compositionally biased region" description="Polar residues" evidence="2">
    <location>
        <begin position="92"/>
        <end position="103"/>
    </location>
</feature>
<feature type="compositionally biased region" description="Polar residues" evidence="2">
    <location>
        <begin position="614"/>
        <end position="626"/>
    </location>
</feature>
<feature type="compositionally biased region" description="Low complexity" evidence="2">
    <location>
        <begin position="627"/>
        <end position="659"/>
    </location>
</feature>
<feature type="compositionally biased region" description="Polar residues" evidence="2">
    <location>
        <begin position="671"/>
        <end position="680"/>
    </location>
</feature>
<feature type="compositionally biased region" description="Low complexity" evidence="2">
    <location>
        <begin position="741"/>
        <end position="762"/>
    </location>
</feature>
<feature type="compositionally biased region" description="Low complexity" evidence="2">
    <location>
        <begin position="807"/>
        <end position="889"/>
    </location>
</feature>
<feature type="compositionally biased region" description="Low complexity" evidence="2">
    <location>
        <begin position="1123"/>
        <end position="1142"/>
    </location>
</feature>
<feature type="modified residue" description="Phosphoserine" evidence="8">
    <location>
        <position position="63"/>
    </location>
</feature>
<feature type="modified residue" description="Phosphoserine" evidence="8">
    <location>
        <position position="207"/>
    </location>
</feature>
<feature type="modified residue" description="Phosphoserine" evidence="8">
    <location>
        <position position="382"/>
    </location>
</feature>
<feature type="modified residue" description="Phosphoserine" evidence="8">
    <location>
        <position position="1063"/>
    </location>
</feature>
<feature type="splice variant" id="VSP_056382" description="In isoform 2." evidence="6">
    <location>
        <begin position="1"/>
        <end position="933"/>
    </location>
</feature>
<feature type="sequence variant" id="VAR_053501" description="In dbSNP:rs176036." evidence="4">
    <original>C</original>
    <variation>Y</variation>
    <location>
        <position position="25"/>
    </location>
</feature>
<feature type="sequence variant" id="VAR_053502" description="In dbSNP:rs176037." evidence="4 5">
    <original>T</original>
    <variation>I</variation>
    <location>
        <position position="151"/>
    </location>
</feature>
<feature type="sequence variant" id="VAR_053503" description="In dbSNP:rs143440588.">
    <original>Q</original>
    <variation>H</variation>
    <location>
        <position position="257"/>
    </location>
</feature>
<feature type="sequence variant" id="VAR_053504" description="In dbSNP:rs75148863.">
    <original>F</original>
    <variation>S</variation>
    <location>
        <position position="276"/>
    </location>
</feature>
<feature type="sequence variant" id="VAR_060068" description="In dbSNP:rs176047." evidence="4 5">
    <original>H</original>
    <variation>Q</variation>
    <location>
        <position position="327"/>
    </location>
</feature>
<feature type="sequence variant" id="VAR_062121" description="In dbSNP:rs56256227.">
    <original>H</original>
    <variation>Y</variation>
    <location>
        <position position="709"/>
    </location>
</feature>
<feature type="sequence conflict" description="In Ref. 1 and 2." evidence="7" ref="1 2">
    <original>TQSTF</original>
    <variation>SQRTS</variation>
    <location>
        <begin position="221"/>
        <end position="225"/>
    </location>
</feature>
<feature type="sequence conflict" description="In Ref. 1 and 2." evidence="7" ref="1 2">
    <original>P</original>
    <variation>S</variation>
    <location>
        <position position="239"/>
    </location>
</feature>
<feature type="sequence conflict" description="In Ref. 1 and 2." evidence="7" ref="1 2">
    <original>FS</original>
    <variation>SP</variation>
    <location>
        <begin position="252"/>
        <end position="253"/>
    </location>
</feature>
<feature type="sequence conflict" description="In Ref. 1 and 2." evidence="7" ref="1 2">
    <original>A</original>
    <variation>P</variation>
    <location>
        <position position="264"/>
    </location>
</feature>
<feature type="sequence conflict" description="In Ref. 1 and 2." evidence="7" ref="1 2">
    <original>S</original>
    <variation>P</variation>
    <location>
        <position position="267"/>
    </location>
</feature>
<feature type="sequence conflict" description="In Ref. 1 and 2." evidence="7" ref="1 2">
    <original>P</original>
    <variation>R</variation>
    <location>
        <position position="274"/>
    </location>
</feature>
<feature type="sequence conflict" description="In Ref. 1 and 2." evidence="7" ref="1 2">
    <original>VSL</original>
    <variation>LSI</variation>
    <location>
        <begin position="281"/>
        <end position="283"/>
    </location>
</feature>
<feature type="sequence conflict" description="In Ref. 1 and 2." evidence="7" ref="1 2">
    <original>P</original>
    <variation>A</variation>
    <location>
        <position position="299"/>
    </location>
</feature>
<feature type="sequence conflict" description="In Ref. 2; AAC24227." evidence="7" ref="2">
    <original>SSS</original>
    <variation>PSF</variation>
    <location>
        <begin position="309"/>
        <end position="311"/>
    </location>
</feature>
<feature type="sequence conflict" description="In Ref. 2; AAC24227." evidence="7" ref="2">
    <original>LSL</original>
    <variation>VSI</variation>
    <location>
        <begin position="316"/>
        <end position="318"/>
    </location>
</feature>
<feature type="sequence conflict" description="In Ref. 2; AAC24227." evidence="7" ref="2">
    <original>L</original>
    <variation>P</variation>
    <location>
        <position position="337"/>
    </location>
</feature>
<feature type="sequence conflict" description="In Ref. 2; AAC24227." evidence="7" ref="2">
    <original>MT</original>
    <variation>VS</variation>
    <location>
        <begin position="342"/>
        <end position="343"/>
    </location>
</feature>
<feature type="sequence conflict" description="In Ref. 2; AAC24227." evidence="7" ref="2">
    <original>I</original>
    <variation>L</variation>
    <location>
        <position position="353"/>
    </location>
</feature>
<feature type="sequence conflict" description="In Ref. 2; AAC24227." evidence="7" ref="2">
    <original>SA</original>
    <variation>RT</variation>
    <location>
        <begin position="360"/>
        <end position="361"/>
    </location>
</feature>
<feature type="sequence conflict" description="In Ref. 1; AAC18837." evidence="7" ref="1">
    <original>H</original>
    <variation>Q</variation>
    <location>
        <position position="467"/>
    </location>
</feature>